<name>BIOB_ACIET</name>
<keyword id="KW-0001">2Fe-2S</keyword>
<keyword id="KW-0004">4Fe-4S</keyword>
<keyword id="KW-0093">Biotin biosynthesis</keyword>
<keyword id="KW-0408">Iron</keyword>
<keyword id="KW-0411">Iron-sulfur</keyword>
<keyword id="KW-0479">Metal-binding</keyword>
<keyword id="KW-1185">Reference proteome</keyword>
<keyword id="KW-0949">S-adenosyl-L-methionine</keyword>
<keyword id="KW-0808">Transferase</keyword>
<organism>
    <name type="scientific">Acidovorax ebreus (strain TPSY)</name>
    <name type="common">Diaphorobacter sp. (strain TPSY)</name>
    <dbReference type="NCBI Taxonomy" id="535289"/>
    <lineage>
        <taxon>Bacteria</taxon>
        <taxon>Pseudomonadati</taxon>
        <taxon>Pseudomonadota</taxon>
        <taxon>Betaproteobacteria</taxon>
        <taxon>Burkholderiales</taxon>
        <taxon>Comamonadaceae</taxon>
        <taxon>Diaphorobacter</taxon>
    </lineage>
</organism>
<comment type="function">
    <text evidence="1">Catalyzes the conversion of dethiobiotin (DTB) to biotin by the insertion of a sulfur atom into dethiobiotin via a radical-based mechanism.</text>
</comment>
<comment type="catalytic activity">
    <reaction evidence="1">
        <text>(4R,5S)-dethiobiotin + (sulfur carrier)-SH + 2 reduced [2Fe-2S]-[ferredoxin] + 2 S-adenosyl-L-methionine = (sulfur carrier)-H + biotin + 2 5'-deoxyadenosine + 2 L-methionine + 2 oxidized [2Fe-2S]-[ferredoxin]</text>
        <dbReference type="Rhea" id="RHEA:22060"/>
        <dbReference type="Rhea" id="RHEA-COMP:10000"/>
        <dbReference type="Rhea" id="RHEA-COMP:10001"/>
        <dbReference type="Rhea" id="RHEA-COMP:14737"/>
        <dbReference type="Rhea" id="RHEA-COMP:14739"/>
        <dbReference type="ChEBI" id="CHEBI:17319"/>
        <dbReference type="ChEBI" id="CHEBI:29917"/>
        <dbReference type="ChEBI" id="CHEBI:33737"/>
        <dbReference type="ChEBI" id="CHEBI:33738"/>
        <dbReference type="ChEBI" id="CHEBI:57586"/>
        <dbReference type="ChEBI" id="CHEBI:57844"/>
        <dbReference type="ChEBI" id="CHEBI:59789"/>
        <dbReference type="ChEBI" id="CHEBI:64428"/>
        <dbReference type="ChEBI" id="CHEBI:149473"/>
        <dbReference type="EC" id="2.8.1.6"/>
    </reaction>
</comment>
<comment type="cofactor">
    <cofactor evidence="1">
        <name>[4Fe-4S] cluster</name>
        <dbReference type="ChEBI" id="CHEBI:49883"/>
    </cofactor>
    <text evidence="1">Binds 1 [4Fe-4S] cluster. The cluster is coordinated with 3 cysteines and an exchangeable S-adenosyl-L-methionine.</text>
</comment>
<comment type="cofactor">
    <cofactor evidence="1">
        <name>[2Fe-2S] cluster</name>
        <dbReference type="ChEBI" id="CHEBI:190135"/>
    </cofactor>
    <text evidence="1">Binds 1 [2Fe-2S] cluster. The cluster is coordinated with 3 cysteines and 1 arginine.</text>
</comment>
<comment type="pathway">
    <text evidence="1">Cofactor biosynthesis; biotin biosynthesis; biotin from 7,8-diaminononanoate: step 2/2.</text>
</comment>
<comment type="subunit">
    <text evidence="1">Homodimer.</text>
</comment>
<comment type="similarity">
    <text evidence="1">Belongs to the radical SAM superfamily. Biotin synthase family.</text>
</comment>
<reference key="1">
    <citation type="submission" date="2009-01" db="EMBL/GenBank/DDBJ databases">
        <title>Complete sequence of Diaphorobacter sp. TPSY.</title>
        <authorList>
            <consortium name="US DOE Joint Genome Institute"/>
            <person name="Lucas S."/>
            <person name="Copeland A."/>
            <person name="Lapidus A."/>
            <person name="Glavina del Rio T."/>
            <person name="Tice H."/>
            <person name="Bruce D."/>
            <person name="Goodwin L."/>
            <person name="Pitluck S."/>
            <person name="Chertkov O."/>
            <person name="Brettin T."/>
            <person name="Detter J.C."/>
            <person name="Han C."/>
            <person name="Larimer F."/>
            <person name="Land M."/>
            <person name="Hauser L."/>
            <person name="Kyrpides N."/>
            <person name="Mikhailova N."/>
            <person name="Coates J.D."/>
        </authorList>
    </citation>
    <scope>NUCLEOTIDE SEQUENCE [LARGE SCALE GENOMIC DNA]</scope>
    <source>
        <strain>TPSY</strain>
    </source>
</reference>
<gene>
    <name evidence="1" type="primary">bioB</name>
    <name type="ordered locus">Dtpsy_1855</name>
</gene>
<evidence type="ECO:0000255" key="1">
    <source>
        <dbReference type="HAMAP-Rule" id="MF_01694"/>
    </source>
</evidence>
<evidence type="ECO:0000255" key="2">
    <source>
        <dbReference type="PROSITE-ProRule" id="PRU01266"/>
    </source>
</evidence>
<feature type="chain" id="PRO_0000381354" description="Biotin synthase">
    <location>
        <begin position="1"/>
        <end position="350"/>
    </location>
</feature>
<feature type="domain" description="Radical SAM core" evidence="2">
    <location>
        <begin position="63"/>
        <end position="281"/>
    </location>
</feature>
<feature type="binding site" evidence="1">
    <location>
        <position position="78"/>
    </location>
    <ligand>
        <name>[4Fe-4S] cluster</name>
        <dbReference type="ChEBI" id="CHEBI:49883"/>
        <note>4Fe-4S-S-AdoMet</note>
    </ligand>
</feature>
<feature type="binding site" evidence="1">
    <location>
        <position position="82"/>
    </location>
    <ligand>
        <name>[4Fe-4S] cluster</name>
        <dbReference type="ChEBI" id="CHEBI:49883"/>
        <note>4Fe-4S-S-AdoMet</note>
    </ligand>
</feature>
<feature type="binding site" evidence="1">
    <location>
        <position position="85"/>
    </location>
    <ligand>
        <name>[4Fe-4S] cluster</name>
        <dbReference type="ChEBI" id="CHEBI:49883"/>
        <note>4Fe-4S-S-AdoMet</note>
    </ligand>
</feature>
<feature type="binding site" evidence="1">
    <location>
        <position position="122"/>
    </location>
    <ligand>
        <name>[2Fe-2S] cluster</name>
        <dbReference type="ChEBI" id="CHEBI:190135"/>
    </ligand>
</feature>
<feature type="binding site" evidence="1">
    <location>
        <position position="153"/>
    </location>
    <ligand>
        <name>[2Fe-2S] cluster</name>
        <dbReference type="ChEBI" id="CHEBI:190135"/>
    </ligand>
</feature>
<feature type="binding site" evidence="1">
    <location>
        <position position="213"/>
    </location>
    <ligand>
        <name>[2Fe-2S] cluster</name>
        <dbReference type="ChEBI" id="CHEBI:190135"/>
    </ligand>
</feature>
<feature type="binding site" evidence="1">
    <location>
        <position position="285"/>
    </location>
    <ligand>
        <name>[2Fe-2S] cluster</name>
        <dbReference type="ChEBI" id="CHEBI:190135"/>
    </ligand>
</feature>
<protein>
    <recommendedName>
        <fullName evidence="1">Biotin synthase</fullName>
        <ecNumber evidence="1">2.8.1.6</ecNumber>
    </recommendedName>
</protein>
<dbReference type="EC" id="2.8.1.6" evidence="1"/>
<dbReference type="EMBL" id="CP001392">
    <property type="protein sequence ID" value="ACM33312.1"/>
    <property type="molecule type" value="Genomic_DNA"/>
</dbReference>
<dbReference type="RefSeq" id="WP_015913378.1">
    <property type="nucleotide sequence ID" value="NC_011992.1"/>
</dbReference>
<dbReference type="SMR" id="B9MJH4"/>
<dbReference type="KEGG" id="dia:Dtpsy_1855"/>
<dbReference type="eggNOG" id="COG0502">
    <property type="taxonomic scope" value="Bacteria"/>
</dbReference>
<dbReference type="HOGENOM" id="CLU_033172_1_2_4"/>
<dbReference type="UniPathway" id="UPA00078">
    <property type="reaction ID" value="UER00162"/>
</dbReference>
<dbReference type="Proteomes" id="UP000000450">
    <property type="component" value="Chromosome"/>
</dbReference>
<dbReference type="GO" id="GO:0051537">
    <property type="term" value="F:2 iron, 2 sulfur cluster binding"/>
    <property type="evidence" value="ECO:0007669"/>
    <property type="project" value="UniProtKB-KW"/>
</dbReference>
<dbReference type="GO" id="GO:0051539">
    <property type="term" value="F:4 iron, 4 sulfur cluster binding"/>
    <property type="evidence" value="ECO:0007669"/>
    <property type="project" value="UniProtKB-KW"/>
</dbReference>
<dbReference type="GO" id="GO:0004076">
    <property type="term" value="F:biotin synthase activity"/>
    <property type="evidence" value="ECO:0007669"/>
    <property type="project" value="UniProtKB-UniRule"/>
</dbReference>
<dbReference type="GO" id="GO:0005506">
    <property type="term" value="F:iron ion binding"/>
    <property type="evidence" value="ECO:0007669"/>
    <property type="project" value="UniProtKB-UniRule"/>
</dbReference>
<dbReference type="GO" id="GO:0009102">
    <property type="term" value="P:biotin biosynthetic process"/>
    <property type="evidence" value="ECO:0007669"/>
    <property type="project" value="UniProtKB-UniRule"/>
</dbReference>
<dbReference type="CDD" id="cd01335">
    <property type="entry name" value="Radical_SAM"/>
    <property type="match status" value="1"/>
</dbReference>
<dbReference type="Gene3D" id="3.20.20.70">
    <property type="entry name" value="Aldolase class I"/>
    <property type="match status" value="1"/>
</dbReference>
<dbReference type="HAMAP" id="MF_01694">
    <property type="entry name" value="BioB"/>
    <property type="match status" value="1"/>
</dbReference>
<dbReference type="InterPro" id="IPR013785">
    <property type="entry name" value="Aldolase_TIM"/>
</dbReference>
<dbReference type="InterPro" id="IPR010722">
    <property type="entry name" value="BATS_dom"/>
</dbReference>
<dbReference type="InterPro" id="IPR002684">
    <property type="entry name" value="Biotin_synth/BioAB"/>
</dbReference>
<dbReference type="InterPro" id="IPR024177">
    <property type="entry name" value="Biotin_synthase"/>
</dbReference>
<dbReference type="InterPro" id="IPR006638">
    <property type="entry name" value="Elp3/MiaA/NifB-like_rSAM"/>
</dbReference>
<dbReference type="InterPro" id="IPR007197">
    <property type="entry name" value="rSAM"/>
</dbReference>
<dbReference type="NCBIfam" id="TIGR00433">
    <property type="entry name" value="bioB"/>
    <property type="match status" value="1"/>
</dbReference>
<dbReference type="PANTHER" id="PTHR22976">
    <property type="entry name" value="BIOTIN SYNTHASE"/>
    <property type="match status" value="1"/>
</dbReference>
<dbReference type="PANTHER" id="PTHR22976:SF2">
    <property type="entry name" value="BIOTIN SYNTHASE, MITOCHONDRIAL"/>
    <property type="match status" value="1"/>
</dbReference>
<dbReference type="Pfam" id="PF06968">
    <property type="entry name" value="BATS"/>
    <property type="match status" value="1"/>
</dbReference>
<dbReference type="Pfam" id="PF04055">
    <property type="entry name" value="Radical_SAM"/>
    <property type="match status" value="1"/>
</dbReference>
<dbReference type="PIRSF" id="PIRSF001619">
    <property type="entry name" value="Biotin_synth"/>
    <property type="match status" value="1"/>
</dbReference>
<dbReference type="SFLD" id="SFLDF00272">
    <property type="entry name" value="biotin_synthase"/>
    <property type="match status" value="1"/>
</dbReference>
<dbReference type="SFLD" id="SFLDS00029">
    <property type="entry name" value="Radical_SAM"/>
    <property type="match status" value="1"/>
</dbReference>
<dbReference type="SMART" id="SM00876">
    <property type="entry name" value="BATS"/>
    <property type="match status" value="1"/>
</dbReference>
<dbReference type="SMART" id="SM00729">
    <property type="entry name" value="Elp3"/>
    <property type="match status" value="1"/>
</dbReference>
<dbReference type="SUPFAM" id="SSF102114">
    <property type="entry name" value="Radical SAM enzymes"/>
    <property type="match status" value="1"/>
</dbReference>
<dbReference type="PROSITE" id="PS51918">
    <property type="entry name" value="RADICAL_SAM"/>
    <property type="match status" value="1"/>
</dbReference>
<sequence length="350" mass="37658">MTSATTAPHTTQTLQFHPRVAESVATQRGEGWSIQAVQELLDLPFMELLWRAQATHRAHWPQGDIELATLLSVKTGGCPENCGYCPQSAEFDTGVKAEKLMSVQEVTQAAQAAKDAGATRFCMGAAWRAPKDRDIEKMSELITAVKDLGLQTCATLGMLQSHQALALKDAGLDYYNHNLDTAPEYYSDVVSTRQYQDRLDTLRHVRDAGINVCCGGIVGMGEAPVHRAGLIAQLANLNPYPESVPINSLVRVAGTPLANSEPVDPLDFVRVIAVARITMPKARVRLSAGRQQLGDAVQALCFLAGANSIFYGDKLLVTSNPDVEADTQLLAKLGLKGTPNQTTTETACGA</sequence>
<proteinExistence type="inferred from homology"/>
<accession>B9MJH4</accession>